<feature type="chain" id="PRO_1000122657" description="ATP phosphoribosyltransferase regulatory subunit">
    <location>
        <begin position="1"/>
        <end position="372"/>
    </location>
</feature>
<proteinExistence type="inferred from homology"/>
<accession>B9J9Y2</accession>
<sequence>MPLIDLPDFAGDLIAEFAARRTDRVDTPIIQPAEPFLDMAGEDLRRRIFLTESETGASLCLRPEFTIPVCLQHIETATGTPKRYSYLGEIFRQRREGGQEFYQAGIEDLGDRDIASADARAVGDAIAILNRLVPGKALSVTLGDQAVFEAVVQALGLPSGWQKRLIHAFGNMMQLETLLARLASPQPVTGLDPHALDFLTRGDEQGLVMHIDSTMQATGYSTNASRSPLEIARRLREKLVLSETRLDDEAFRVLEEFLSLSVPLADASSALAGFADAAGLKLGTALERFDARVAALANAGVDAGSIDYRAAFGRPLDYYTGLVFEVTMEGSAAVLVGGGRFDRLLTLLGAKDHIPAVGFALWLDRIETARAA</sequence>
<evidence type="ECO:0000255" key="1">
    <source>
        <dbReference type="HAMAP-Rule" id="MF_00125"/>
    </source>
</evidence>
<organism>
    <name type="scientific">Rhizobium rhizogenes (strain K84 / ATCC BAA-868)</name>
    <name type="common">Agrobacterium radiobacter</name>
    <dbReference type="NCBI Taxonomy" id="311403"/>
    <lineage>
        <taxon>Bacteria</taxon>
        <taxon>Pseudomonadati</taxon>
        <taxon>Pseudomonadota</taxon>
        <taxon>Alphaproteobacteria</taxon>
        <taxon>Hyphomicrobiales</taxon>
        <taxon>Rhizobiaceae</taxon>
        <taxon>Rhizobium/Agrobacterium group</taxon>
        <taxon>Rhizobium</taxon>
    </lineage>
</organism>
<gene>
    <name evidence="1" type="primary">hisZ</name>
    <name type="ordered locus">Arad_1056</name>
</gene>
<comment type="function">
    <text evidence="1">Required for the first step of histidine biosynthesis. May allow the feedback regulation of ATP phosphoribosyltransferase activity by histidine.</text>
</comment>
<comment type="pathway">
    <text evidence="1">Amino-acid biosynthesis; L-histidine biosynthesis; L-histidine from 5-phospho-alpha-D-ribose 1-diphosphate: step 1/9.</text>
</comment>
<comment type="subunit">
    <text evidence="1">Heteromultimer composed of HisG and HisZ subunits.</text>
</comment>
<comment type="subcellular location">
    <subcellularLocation>
        <location evidence="1">Cytoplasm</location>
    </subcellularLocation>
</comment>
<comment type="miscellaneous">
    <text>This function is generally fulfilled by the C-terminal part of HisG, which is missing in some bacteria such as this one.</text>
</comment>
<comment type="similarity">
    <text evidence="1">Belongs to the class-II aminoacyl-tRNA synthetase family. HisZ subfamily.</text>
</comment>
<protein>
    <recommendedName>
        <fullName evidence="1">ATP phosphoribosyltransferase regulatory subunit</fullName>
    </recommendedName>
</protein>
<name>HISZ_RHIR8</name>
<keyword id="KW-0028">Amino-acid biosynthesis</keyword>
<keyword id="KW-0963">Cytoplasm</keyword>
<keyword id="KW-0368">Histidine biosynthesis</keyword>
<dbReference type="EMBL" id="CP000628">
    <property type="protein sequence ID" value="ACM25600.1"/>
    <property type="molecule type" value="Genomic_DNA"/>
</dbReference>
<dbReference type="RefSeq" id="WP_012651006.1">
    <property type="nucleotide sequence ID" value="NC_011985.1"/>
</dbReference>
<dbReference type="SMR" id="B9J9Y2"/>
<dbReference type="STRING" id="311403.Arad_1056"/>
<dbReference type="KEGG" id="ara:Arad_1056"/>
<dbReference type="eggNOG" id="COG3705">
    <property type="taxonomic scope" value="Bacteria"/>
</dbReference>
<dbReference type="HOGENOM" id="CLU_025113_6_0_5"/>
<dbReference type="UniPathway" id="UPA00031">
    <property type="reaction ID" value="UER00006"/>
</dbReference>
<dbReference type="Proteomes" id="UP000001600">
    <property type="component" value="Chromosome 1"/>
</dbReference>
<dbReference type="GO" id="GO:0005737">
    <property type="term" value="C:cytoplasm"/>
    <property type="evidence" value="ECO:0007669"/>
    <property type="project" value="UniProtKB-SubCell"/>
</dbReference>
<dbReference type="GO" id="GO:0004821">
    <property type="term" value="F:histidine-tRNA ligase activity"/>
    <property type="evidence" value="ECO:0007669"/>
    <property type="project" value="TreeGrafter"/>
</dbReference>
<dbReference type="GO" id="GO:0006427">
    <property type="term" value="P:histidyl-tRNA aminoacylation"/>
    <property type="evidence" value="ECO:0007669"/>
    <property type="project" value="TreeGrafter"/>
</dbReference>
<dbReference type="GO" id="GO:0000105">
    <property type="term" value="P:L-histidine biosynthetic process"/>
    <property type="evidence" value="ECO:0007669"/>
    <property type="project" value="UniProtKB-UniRule"/>
</dbReference>
<dbReference type="Gene3D" id="3.30.930.10">
    <property type="entry name" value="Bira Bifunctional Protein, Domain 2"/>
    <property type="match status" value="1"/>
</dbReference>
<dbReference type="HAMAP" id="MF_00125">
    <property type="entry name" value="HisZ"/>
    <property type="match status" value="1"/>
</dbReference>
<dbReference type="InterPro" id="IPR045864">
    <property type="entry name" value="aa-tRNA-synth_II/BPL/LPL"/>
</dbReference>
<dbReference type="InterPro" id="IPR041715">
    <property type="entry name" value="HisRS-like_core"/>
</dbReference>
<dbReference type="InterPro" id="IPR004516">
    <property type="entry name" value="HisRS/HisZ"/>
</dbReference>
<dbReference type="InterPro" id="IPR004517">
    <property type="entry name" value="HisZ"/>
</dbReference>
<dbReference type="NCBIfam" id="NF008951">
    <property type="entry name" value="PRK12295.1-4"/>
    <property type="match status" value="1"/>
</dbReference>
<dbReference type="PANTHER" id="PTHR43707:SF1">
    <property type="entry name" value="HISTIDINE--TRNA LIGASE, MITOCHONDRIAL-RELATED"/>
    <property type="match status" value="1"/>
</dbReference>
<dbReference type="PANTHER" id="PTHR43707">
    <property type="entry name" value="HISTIDYL-TRNA SYNTHETASE"/>
    <property type="match status" value="1"/>
</dbReference>
<dbReference type="Pfam" id="PF13393">
    <property type="entry name" value="tRNA-synt_His"/>
    <property type="match status" value="2"/>
</dbReference>
<dbReference type="PIRSF" id="PIRSF001549">
    <property type="entry name" value="His-tRNA_synth"/>
    <property type="match status" value="1"/>
</dbReference>
<dbReference type="SUPFAM" id="SSF55681">
    <property type="entry name" value="Class II aaRS and biotin synthetases"/>
    <property type="match status" value="1"/>
</dbReference>
<reference key="1">
    <citation type="journal article" date="2009" name="J. Bacteriol.">
        <title>Genome sequences of three Agrobacterium biovars help elucidate the evolution of multichromosome genomes in bacteria.</title>
        <authorList>
            <person name="Slater S.C."/>
            <person name="Goldman B.S."/>
            <person name="Goodner B."/>
            <person name="Setubal J.C."/>
            <person name="Farrand S.K."/>
            <person name="Nester E.W."/>
            <person name="Burr T.J."/>
            <person name="Banta L."/>
            <person name="Dickerman A.W."/>
            <person name="Paulsen I."/>
            <person name="Otten L."/>
            <person name="Suen G."/>
            <person name="Welch R."/>
            <person name="Almeida N.F."/>
            <person name="Arnold F."/>
            <person name="Burton O.T."/>
            <person name="Du Z."/>
            <person name="Ewing A."/>
            <person name="Godsy E."/>
            <person name="Heisel S."/>
            <person name="Houmiel K.L."/>
            <person name="Jhaveri J."/>
            <person name="Lu J."/>
            <person name="Miller N.M."/>
            <person name="Norton S."/>
            <person name="Chen Q."/>
            <person name="Phoolcharoen W."/>
            <person name="Ohlin V."/>
            <person name="Ondrusek D."/>
            <person name="Pride N."/>
            <person name="Stricklin S.L."/>
            <person name="Sun J."/>
            <person name="Wheeler C."/>
            <person name="Wilson L."/>
            <person name="Zhu H."/>
            <person name="Wood D.W."/>
        </authorList>
    </citation>
    <scope>NUCLEOTIDE SEQUENCE [LARGE SCALE GENOMIC DNA]</scope>
    <source>
        <strain>K84 / ATCC BAA-868</strain>
    </source>
</reference>